<feature type="chain" id="PRO_0000196100" description="Cuticle protein 19">
    <location>
        <begin position="1"/>
        <end position="157"/>
    </location>
</feature>
<feature type="repeat" description="1">
    <location>
        <begin position="11"/>
        <end position="14"/>
    </location>
</feature>
<feature type="repeat" description="2">
    <location>
        <begin position="18"/>
        <end position="21"/>
    </location>
</feature>
<feature type="repeat" description="3">
    <location>
        <begin position="24"/>
        <end position="27"/>
    </location>
</feature>
<feature type="repeat" description="4">
    <location>
        <begin position="29"/>
        <end position="32"/>
    </location>
</feature>
<feature type="repeat" description="5">
    <location>
        <begin position="39"/>
        <end position="42"/>
    </location>
</feature>
<feature type="repeat" description="6">
    <location>
        <begin position="47"/>
        <end position="50"/>
    </location>
</feature>
<feature type="domain" description="Chitin-binding type R&amp;R" evidence="1">
    <location>
        <begin position="56"/>
        <end position="127"/>
    </location>
</feature>
<feature type="repeat" description="7">
    <location>
        <begin position="141"/>
        <end position="144"/>
    </location>
</feature>
<name>CU19_LOCMI</name>
<accession>P45583</accession>
<protein>
    <recommendedName>
        <fullName>Cuticle protein 19</fullName>
    </recommendedName>
    <alternativeName>
        <fullName>LM-ACP 19</fullName>
        <shortName>LM-19</shortName>
    </alternativeName>
</protein>
<dbReference type="GO" id="GO:0031012">
    <property type="term" value="C:extracellular matrix"/>
    <property type="evidence" value="ECO:0007669"/>
    <property type="project" value="TreeGrafter"/>
</dbReference>
<dbReference type="GO" id="GO:0005615">
    <property type="term" value="C:extracellular space"/>
    <property type="evidence" value="ECO:0007669"/>
    <property type="project" value="TreeGrafter"/>
</dbReference>
<dbReference type="GO" id="GO:0042302">
    <property type="term" value="F:structural constituent of cuticle"/>
    <property type="evidence" value="ECO:0007669"/>
    <property type="project" value="UniProtKB-KW"/>
</dbReference>
<dbReference type="InterPro" id="IPR031311">
    <property type="entry name" value="CHIT_BIND_RR_consensus"/>
</dbReference>
<dbReference type="InterPro" id="IPR000618">
    <property type="entry name" value="Insect_cuticle"/>
</dbReference>
<dbReference type="InterPro" id="IPR051217">
    <property type="entry name" value="Insect_Cuticle_Struc_Prot"/>
</dbReference>
<dbReference type="PANTHER" id="PTHR12236:SF75">
    <property type="entry name" value="CUTICULAR PROTEIN 62BB, ISOFORM A"/>
    <property type="match status" value="1"/>
</dbReference>
<dbReference type="PANTHER" id="PTHR12236">
    <property type="entry name" value="STRUCTURAL CONTITUENT OF CUTICLE"/>
    <property type="match status" value="1"/>
</dbReference>
<dbReference type="Pfam" id="PF00379">
    <property type="entry name" value="Chitin_bind_4"/>
    <property type="match status" value="1"/>
</dbReference>
<dbReference type="PRINTS" id="PR00947">
    <property type="entry name" value="CUTICLE"/>
</dbReference>
<dbReference type="PROSITE" id="PS00233">
    <property type="entry name" value="CHIT_BIND_RR_1"/>
    <property type="match status" value="1"/>
</dbReference>
<dbReference type="PROSITE" id="PS51155">
    <property type="entry name" value="CHIT_BIND_RR_2"/>
    <property type="match status" value="1"/>
</dbReference>
<comment type="function">
    <text>Component of the cuticle of migratory locust which contains more than 100 different structural proteins.</text>
</comment>
<comment type="domain">
    <text>The tetrapeptide (A-A-P-[AV]) repeats found throughout the protein are also present in many proteins constituting the protective envelope of other species.</text>
</comment>
<comment type="mass spectrometry" mass="16127.7" method="Electrospray" evidence="2"/>
<proteinExistence type="evidence at protein level"/>
<evidence type="ECO:0000255" key="1">
    <source>
        <dbReference type="PROSITE-ProRule" id="PRU00497"/>
    </source>
</evidence>
<evidence type="ECO:0000269" key="2">
    <source>
    </source>
</evidence>
<organism>
    <name type="scientific">Locusta migratoria</name>
    <name type="common">Migratory locust</name>
    <dbReference type="NCBI Taxonomy" id="7004"/>
    <lineage>
        <taxon>Eukaryota</taxon>
        <taxon>Metazoa</taxon>
        <taxon>Ecdysozoa</taxon>
        <taxon>Arthropoda</taxon>
        <taxon>Hexapoda</taxon>
        <taxon>Insecta</taxon>
        <taxon>Pterygota</taxon>
        <taxon>Neoptera</taxon>
        <taxon>Polyneoptera</taxon>
        <taxon>Orthoptera</taxon>
        <taxon>Caelifera</taxon>
        <taxon>Acrididea</taxon>
        <taxon>Acridomorpha</taxon>
        <taxon>Acridoidea</taxon>
        <taxon>Acrididae</taxon>
        <taxon>Oedipodinae</taxon>
        <taxon>Locusta</taxon>
    </lineage>
</organism>
<sequence length="157" mass="16129">GYLGGYAGYAAAPAAYAAAPAAYAAPAYAAPAVVKTAYAAPAIVKAAAPAVDYYSYPKYAFEYGVNDPHTGDVKRQWEERDGDVVRGEYSLLEPDGTTRTVTYTADAHNGFNAVVHRSGPSAHPAPAPAVAVPAVAKYVAAAPAVVKSVGYGGYGYH</sequence>
<keyword id="KW-0193">Cuticle</keyword>
<keyword id="KW-0903">Direct protein sequencing</keyword>
<keyword id="KW-0677">Repeat</keyword>
<reference key="1">
    <citation type="journal article" date="1995" name="Insect Biochem. Mol. Biol.">
        <title>Primary structure of proteins from the wing cuticle of the migratory locust, Locusta migratoria.</title>
        <authorList>
            <person name="Krogh T.N."/>
            <person name="Skou L."/>
            <person name="Roepstorff P."/>
            <person name="Andersen S.O."/>
            <person name="Hoejrup P."/>
        </authorList>
    </citation>
    <scope>PROTEIN SEQUENCE</scope>
    <scope>MASS SPECTROMETRY</scope>
    <source>
        <tissue>Wing</tissue>
    </source>
</reference>